<protein>
    <recommendedName>
        <fullName evidence="11">Violaxanthin de-epoxidase, chloroplastic</fullName>
        <ecNumber evidence="6 7">1.23.5.1</ecNumber>
    </recommendedName>
</protein>
<keyword id="KW-0150">Chloroplast</keyword>
<keyword id="KW-0175">Coiled coil</keyword>
<keyword id="KW-0903">Direct protein sequencing</keyword>
<keyword id="KW-1015">Disulfide bond</keyword>
<keyword id="KW-0472">Membrane</keyword>
<keyword id="KW-0560">Oxidoreductase</keyword>
<keyword id="KW-0934">Plastid</keyword>
<keyword id="KW-1185">Reference proteome</keyword>
<keyword id="KW-0793">Thylakoid</keyword>
<keyword id="KW-0809">Transit peptide</keyword>
<name>VDE_SPIOL</name>
<organism>
    <name type="scientific">Spinacia oleracea</name>
    <name type="common">Spinach</name>
    <dbReference type="NCBI Taxonomy" id="3562"/>
    <lineage>
        <taxon>Eukaryota</taxon>
        <taxon>Viridiplantae</taxon>
        <taxon>Streptophyta</taxon>
        <taxon>Embryophyta</taxon>
        <taxon>Tracheophyta</taxon>
        <taxon>Spermatophyta</taxon>
        <taxon>Magnoliopsida</taxon>
        <taxon>eudicotyledons</taxon>
        <taxon>Gunneridae</taxon>
        <taxon>Pentapetalae</taxon>
        <taxon>Caryophyllales</taxon>
        <taxon>Chenopodiaceae</taxon>
        <taxon>Chenopodioideae</taxon>
        <taxon>Anserineae</taxon>
        <taxon>Spinacia</taxon>
    </lineage>
</organism>
<evidence type="ECO:0000255" key="1"/>
<evidence type="ECO:0000269" key="2">
    <source>
    </source>
</evidence>
<evidence type="ECO:0000269" key="3">
    <source>
    </source>
</evidence>
<evidence type="ECO:0000269" key="4">
    <source>
    </source>
</evidence>
<evidence type="ECO:0000269" key="5">
    <source>
    </source>
</evidence>
<evidence type="ECO:0000269" key="6">
    <source ref="1"/>
</evidence>
<evidence type="ECO:0000269" key="7">
    <source ref="2"/>
</evidence>
<evidence type="ECO:0000269" key="8">
    <source ref="3"/>
</evidence>
<evidence type="ECO:0000269" key="9">
    <source ref="4"/>
</evidence>
<evidence type="ECO:0000269" key="10">
    <source ref="5"/>
</evidence>
<evidence type="ECO:0000303" key="11">
    <source ref="2"/>
</evidence>
<evidence type="ECO:0000305" key="12"/>
<evidence type="ECO:0000305" key="13">
    <source ref="2"/>
</evidence>
<reference key="1">
    <citation type="journal article" date="2003" name="Physiol. Plantarum">
        <title>Chemical and mutational modification of histidines in violaxanthinde-epoxidase from Spinacia oleracea.</title>
        <authorList>
            <person name="Emanuelsson A.K."/>
            <person name="Eskling M."/>
            <person name="Aakerlund H.-E."/>
        </authorList>
    </citation>
    <scope>NUCLEOTIDE SEQUENCE [MRNA]</scope>
    <scope>MUTAGENESIS OF HIS-245; HIS-248; HIS-291 AND HIS-297</scope>
    <scope>CATALYTIC ACTIVITY</scope>
    <scope>BIOPHYSICOCHEMICAL PROPERTIES</scope>
    <source>
        <tissue>Leaf</tissue>
    </source>
</reference>
<reference key="2">
    <citation type="journal article" date="1996" name="Photosyn. Res.">
        <title>Purification and identification of the violaxanthin deepoxidase as a 43 kDa protein.</title>
        <authorList>
            <person name="Arvidsson P.-O."/>
            <person name="Bratt C.E."/>
            <person name="Carlsson M."/>
            <person name="Aakerlund H.-E."/>
        </authorList>
    </citation>
    <scope>PROTEIN SEQUENCE OF 125-144</scope>
    <scope>CATALYTIC ACTIVITY</scope>
</reference>
<reference key="3">
    <citation type="journal article" date="1994" name="Planta">
        <title>Localization of the xanthophyll-cycle enzyme violaxanthin de-epoxidase within the thylakoid lumen and abolition of its mobility by a (light-dependent) pH decrease.</title>
        <authorList>
            <person name="Hager A."/>
            <person name="Holocher K."/>
        </authorList>
    </citation>
    <scope>SUBCELLULAR LOCATION</scope>
    <scope>ACTIVITY REGULATION</scope>
    <scope>BIOPHYSICOCHEMICAL PROPERTIES</scope>
</reference>
<reference key="4">
    <citation type="journal article" date="1995" name="Photosyn. Res.">
        <title>Regulation of violaxanthin de-epoxidase activity by pH and ascorbate concentration.</title>
        <authorList>
            <person name="Bratt C.E."/>
            <person name="Arvidsson P.-O."/>
            <person name="Carlsson M."/>
            <person name="Aakerlund H.-E."/>
        </authorList>
    </citation>
    <scope>SUBCELLULAR LOCATION</scope>
    <scope>BIOPHYSICOCHEMICAL PROPERTIES</scope>
</reference>
<reference key="5">
    <citation type="journal article" date="1997" name="Photosyn. Res.">
        <title>Violaxanthin accessibility and temperature dependency for de-epoxidation in spinach thylakoid membranes.</title>
        <authorList>
            <person name="Arvidsson P.-O."/>
            <person name="Carlsson M."/>
            <person name="Stefansson H."/>
            <person name="Albertsson P.-A."/>
            <person name="Aakerlund H.-E."/>
        </authorList>
    </citation>
    <scope>ACTIVITY REGULATION</scope>
</reference>
<reference key="6">
    <citation type="journal article" date="2000" name="Photosyn. Res.">
        <title>Influence of Ca(2+) on the thylakoid lumen violaxanthin de-epoxidase activity through Ca(2+) gating of H(+) flux at the CF(o) H(+) channel.</title>
        <authorList>
            <person name="Pan R.-S."/>
            <person name="Dilley R.A."/>
        </authorList>
    </citation>
    <scope>ACTIVITY REGULATION</scope>
</reference>
<reference key="7">
    <citation type="journal article" date="2004" name="Biochemistry">
        <title>Violaxanthin de-epoxidase, the xanthophyll cycle enzyme, requires lipid inverted hexagonal structures for its activity.</title>
        <authorList>
            <person name="Latowski D."/>
            <person name="Aakerlund H.-E."/>
            <person name="Strzalka K."/>
        </authorList>
    </citation>
    <scope>ACTIVITY REGULATION</scope>
</reference>
<reference key="8">
    <citation type="journal article" date="2007" name="Biochim. Biophys. Acta">
        <title>Membrane curvature stress controls the maximal conversion of violaxanthin to zeaxanthin in the violaxanthin cycle--influence of alpha-tocopherol, cetylethers, linolenic acid, and temperature.</title>
        <authorList>
            <person name="Szilagyi A."/>
            <person name="Sommarin M."/>
            <person name="Akerlund H.E."/>
        </authorList>
    </citation>
    <scope>ACTIVITY REGULATION</scope>
</reference>
<reference key="9">
    <citation type="journal article" date="2015" name="Photosyn. Res.">
        <title>Violaxanthin de-epoxidase disulphides and their role in activity and thermal stability.</title>
        <authorList>
            <person name="Hallin E.I."/>
            <person name="Guo K."/>
            <person name="Aakerlund H.E."/>
        </authorList>
    </citation>
    <scope>MUTAGENESIS OF CYS-131; CYS-133; CYS-138; CYS-145; CYS-151; CYS-157; CYS-161; CYS-170; CYS-174; CYS-189; CYS-196; CYS-242 AND CYS-372</scope>
    <scope>DISULFIDE BOND</scope>
</reference>
<gene>
    <name evidence="11" type="primary">VDE1</name>
    <name type="synonym">SVDE1</name>
</gene>
<dbReference type="EC" id="1.23.5.1" evidence="6 7"/>
<dbReference type="EMBL" id="AJ250433">
    <property type="protein sequence ID" value="CAB59211.2"/>
    <property type="molecule type" value="mRNA"/>
</dbReference>
<dbReference type="SMR" id="Q9SM43"/>
<dbReference type="KEGG" id="ag:CAB59211"/>
<dbReference type="OrthoDB" id="10258187at2759"/>
<dbReference type="BRENDA" id="1.23.5.1">
    <property type="organism ID" value="5812"/>
</dbReference>
<dbReference type="SABIO-RK" id="Q9SM43"/>
<dbReference type="Proteomes" id="UP001155700">
    <property type="component" value="Unplaced"/>
</dbReference>
<dbReference type="GO" id="GO:0009535">
    <property type="term" value="C:chloroplast thylakoid membrane"/>
    <property type="evidence" value="ECO:0007669"/>
    <property type="project" value="UniProtKB-SubCell"/>
</dbReference>
<dbReference type="GO" id="GO:0046422">
    <property type="term" value="F:violaxanthin de-epoxidase activity"/>
    <property type="evidence" value="ECO:0000318"/>
    <property type="project" value="GO_Central"/>
</dbReference>
<dbReference type="GO" id="GO:0015994">
    <property type="term" value="P:chlorophyll metabolic process"/>
    <property type="evidence" value="ECO:0000318"/>
    <property type="project" value="GO_Central"/>
</dbReference>
<dbReference type="GO" id="GO:0010028">
    <property type="term" value="P:xanthophyll cycle"/>
    <property type="evidence" value="ECO:0000318"/>
    <property type="project" value="GO_Central"/>
</dbReference>
<dbReference type="CDD" id="cd19420">
    <property type="entry name" value="lipocalin_VDE"/>
    <property type="match status" value="1"/>
</dbReference>
<dbReference type="Gene3D" id="2.40.128.20">
    <property type="match status" value="1"/>
</dbReference>
<dbReference type="InterPro" id="IPR012674">
    <property type="entry name" value="Calycin"/>
</dbReference>
<dbReference type="InterPro" id="IPR044682">
    <property type="entry name" value="VDE"/>
</dbReference>
<dbReference type="InterPro" id="IPR010788">
    <property type="entry name" value="VDE_dom"/>
</dbReference>
<dbReference type="PANTHER" id="PTHR33970:SF1">
    <property type="entry name" value="VIOLAXANTHIN DE-EPOXIDASE, CHLOROPLASTIC"/>
    <property type="match status" value="1"/>
</dbReference>
<dbReference type="PANTHER" id="PTHR33970">
    <property type="entry name" value="VIOLAXANTHIN DE-EPOXIDASE, CHLOROPLASTIC-RELATED"/>
    <property type="match status" value="1"/>
</dbReference>
<dbReference type="Pfam" id="PF07137">
    <property type="entry name" value="VDE"/>
    <property type="match status" value="1"/>
</dbReference>
<dbReference type="SUPFAM" id="SSF50814">
    <property type="entry name" value="Lipocalins"/>
    <property type="match status" value="1"/>
</dbReference>
<feature type="transit peptide" description="Chloroplast">
    <location>
        <begin position="1"/>
        <end status="unknown"/>
    </location>
</feature>
<feature type="transit peptide" description="Thylakoid" evidence="7">
    <location>
        <begin status="unknown"/>
        <end position="124"/>
    </location>
</feature>
<feature type="chain" id="PRO_0000273251" description="Violaxanthin de-epoxidase, chloroplastic">
    <location>
        <begin position="125"/>
        <end position="472"/>
    </location>
</feature>
<feature type="coiled-coil region" evidence="1">
    <location>
        <begin position="379"/>
        <end position="462"/>
    </location>
</feature>
<feature type="disulfide bond" evidence="5">
    <location>
        <begin position="133"/>
        <end position="151"/>
    </location>
</feature>
<feature type="disulfide bond" evidence="5">
    <location>
        <begin position="138"/>
        <end position="145"/>
    </location>
</feature>
<feature type="disulfide bond" evidence="5">
    <location>
        <begin position="157"/>
        <end position="174"/>
    </location>
</feature>
<feature type="disulfide bond" evidence="5">
    <location>
        <begin position="161"/>
        <end position="170"/>
    </location>
</feature>
<feature type="disulfide bond" evidence="5">
    <location>
        <begin position="189"/>
        <end position="196"/>
    </location>
</feature>
<feature type="disulfide bond" evidence="5">
    <location>
        <begin position="242"/>
        <end position="372"/>
    </location>
</feature>
<feature type="mutagenesis site" description="No effect on activity." evidence="5">
    <original>C</original>
    <variation>S</variation>
    <location>
        <position position="131"/>
    </location>
</feature>
<feature type="mutagenesis site" description="Loss of activity." evidence="5">
    <original>C</original>
    <variation>S</variation>
    <location>
        <position position="133"/>
    </location>
</feature>
<feature type="mutagenesis site" description="Loss of activity." evidence="5">
    <original>C</original>
    <variation>S</variation>
    <location>
        <position position="138"/>
    </location>
</feature>
<feature type="mutagenesis site" description="Loss of activity." evidence="5">
    <original>C</original>
    <variation>S</variation>
    <location>
        <position position="145"/>
    </location>
</feature>
<feature type="mutagenesis site" description="Loss of activity." evidence="5">
    <original>C</original>
    <variation>S</variation>
    <location>
        <position position="151"/>
    </location>
</feature>
<feature type="mutagenesis site" description="Loss of activity." evidence="5">
    <original>C</original>
    <variation>S</variation>
    <location>
        <position position="157"/>
    </location>
</feature>
<feature type="mutagenesis site" description="Loss of activity." evidence="5">
    <original>C</original>
    <variation>S</variation>
    <location>
        <position position="161"/>
    </location>
</feature>
<feature type="mutagenesis site" description="Loss of activity." evidence="5">
    <original>C</original>
    <variation>S</variation>
    <location>
        <position position="170"/>
    </location>
</feature>
<feature type="mutagenesis site" description="Loss of activity." evidence="5">
    <original>C</original>
    <variation>S</variation>
    <location>
        <position position="174"/>
    </location>
</feature>
<feature type="mutagenesis site" description="Loss of activity." evidence="5">
    <original>C</original>
    <variation>S</variation>
    <location>
        <position position="189"/>
    </location>
</feature>
<feature type="mutagenesis site" description="Loss of activity." evidence="5">
    <original>C</original>
    <variation>S</variation>
    <location>
        <position position="196"/>
    </location>
</feature>
<feature type="mutagenesis site" description="Loss of activity." evidence="5">
    <original>C</original>
    <variation>S</variation>
    <location>
        <position position="242"/>
    </location>
</feature>
<feature type="mutagenesis site" description="55% loss of activity; when associated with A-248. Total loss of activity; when associated with A-248; A-291 and R-297." evidence="6">
    <original>H</original>
    <variation>A</variation>
    <location>
        <position position="245"/>
    </location>
</feature>
<feature type="mutagenesis site" description="Total loss of activity; when associated with R-248. Total loss of activity; when associated with R-248; R-291 and R-297." evidence="6">
    <original>H</original>
    <variation>R</variation>
    <location>
        <position position="245"/>
    </location>
</feature>
<feature type="mutagenesis site" description="40% loss of activity. 55% loss of activity; when associated with A-245. Total loss of activity; when associated with A-245; A-291 and R-297." evidence="6">
    <original>H</original>
    <variation>A</variation>
    <location>
        <position position="248"/>
    </location>
</feature>
<feature type="mutagenesis site" description="No effect. Total loss of activity; when associated with R-245. Total loss of activity; when associated with R-245; R-291 and R-297." evidence="6">
    <original>H</original>
    <variation>R</variation>
    <location>
        <position position="248"/>
    </location>
</feature>
<feature type="mutagenesis site" description="99% loss of activity. Total loss of activity; when associated with A-245; A-248 and A-297." evidence="6">
    <original>H</original>
    <variation>A</variation>
    <location>
        <position position="291"/>
    </location>
</feature>
<feature type="mutagenesis site" description="55% loss of activity; when associated with R-297. Total loss of activity; when associated with R-245; R-248 and R-297." evidence="6">
    <original>H</original>
    <variation>R</variation>
    <location>
        <position position="291"/>
    </location>
</feature>
<feature type="mutagenesis site" description="55% loss of activity; when associated with R-291. Total loss of activity; when associated with R-245; R-248 and R-291. Total loss of activity; when associated with A-245; A-248 and A-291." evidence="6">
    <original>H</original>
    <variation>R</variation>
    <location>
        <position position="297"/>
    </location>
</feature>
<feature type="mutagenesis site" description="Loss of activity." evidence="5">
    <original>C</original>
    <variation>S</variation>
    <location>
        <position position="372"/>
    </location>
</feature>
<proteinExistence type="evidence at protein level"/>
<comment type="function">
    <text>Part of the xanthophyll (or violaxanthin) cycle for controlling the concentration of zeaxanthin in chloroplasts. Catalyzes the two-step mono de-epoxidation reaction. Stereospecific for all-trans xanthophylls. Zeaxanthin induces the dissipation of excitation energy in the chlorophyll of the light-harvesting protein complex of photosystem II.</text>
</comment>
<comment type="catalytic activity">
    <reaction evidence="6">
        <text>all-trans-violaxanthin + 2 L-ascorbate = all-trans-zeaxanthin + 2 L-dehydroascorbate + 2 H2O</text>
        <dbReference type="Rhea" id="RHEA:32371"/>
        <dbReference type="ChEBI" id="CHEBI:15377"/>
        <dbReference type="ChEBI" id="CHEBI:27547"/>
        <dbReference type="ChEBI" id="CHEBI:35288"/>
        <dbReference type="ChEBI" id="CHEBI:38290"/>
        <dbReference type="ChEBI" id="CHEBI:58539"/>
        <dbReference type="EC" id="1.23.5.1"/>
    </reaction>
</comment>
<comment type="activity regulation">
    <text evidence="2 3 4 8 10">Irreversibly inhibited by DTT and iodoacetamide at pH 5.7 or pH 5.2, but not at pH 7.2 (Ref.3, Ref.5). Regulated through Ca(2+) gating of H(+) flux at the CFoH(+) channel (PubMed:16228481). Requires the presence of lipids forming reverse hexagonal structures such as monogalactosyldiacylglyceride (MGDG) or phosphatidylethanolamine (PubMed:15078086). A negative curvature elastic stress in the thylakoid lipid bilayer is required for VDE1 activity (PubMed:17618598).</text>
</comment>
<comment type="biophysicochemical properties">
    <kinetics>
        <KM evidence="9">10 mM for ascorbate at pH 6.0</KM>
        <KM evidence="9">2.5 mM for ascorbate at pH 5.5</KM>
        <KM evidence="9">1 mM for ascorbate at pH 5.0</KM>
        <KM evidence="9">0.3 mM for ascorbate at pH 4.5</KM>
        <text evidence="6">KM for ascorbate increased when H-245, H-248, H-291 or H-297 are mutated.</text>
    </kinetics>
    <phDependence>
        <text evidence="8">Optimum pH is 5.0.</text>
    </phDependence>
</comment>
<comment type="subcellular location">
    <subcellularLocation>
        <location evidence="8 9">Plastid</location>
        <location evidence="8 9">Chloroplast thylakoid membrane</location>
        <topology evidence="8 9">Peripheral membrane protein</topology>
        <orientation evidence="8 9">Lumenal side</orientation>
    </subcellularLocation>
    <text evidence="8">Binds to the thylakoid membrane at pH 5.2 and is released in the lumen at pH 7.2.</text>
</comment>
<comment type="PTM">
    <text evidence="5">Disulfide bonds. Reduction of the disulfides results in loss of a rigid structure, a decrease in thermal stability of 15 degrees Celsius and a loss of activity.</text>
</comment>
<comment type="miscellaneous">
    <text evidence="13">The amount of VDE in vivo is estimated to be 1 molecule per 20-100 electron transport chains.</text>
</comment>
<comment type="similarity">
    <text evidence="12">Belongs to the calycin superfamily. Lipocalin family.</text>
</comment>
<sequence>MALVARSICVSYDEIAGICNNVSHRNFKKWVQWKNPFLFQDDARRNIRFNDRKLSCTKFIGASEKLQHSKSPKSGLISCGWEVNSSKVVSNAVIPKKWNLLKLKVVEVTAIVACTFFVMSSAQAVDALKTCTCLLKECRIELAKCIANPSCAANVACLQTCNNRPDETECQIKCGDLFANKVVDEFNECAVSRKKCVPQKSDVGEFPVPDPSVLVKSFNMADFNGKWFISSGLNPTFDAFDCQLHEFHLEDGKLVGNLSWRIKTPDGGFFTRTAVQKFAQDPSQPGMLYNHDNAYLHYQDDWYILSSKIENQPDDYVFVYYRGRNDAWDGYGGAFLYTRSATVPENIVPELNRAAQSVGKDFNKFIRTDNTCGPEPPLVERLEKTVEEGERTIIKEVEQLEGEIEGDLEKVGKTEMTLFQRLLEGFQELQKDEEYFLKELNKEERELLEDLKMEAGEVEKLFGRALPIRKLR</sequence>
<accession>Q9SM43</accession>